<organism>
    <name type="scientific">Hydra vulgaris</name>
    <name type="common">Hydra</name>
    <name type="synonym">Hydra attenuata</name>
    <dbReference type="NCBI Taxonomy" id="6087"/>
    <lineage>
        <taxon>Eukaryota</taxon>
        <taxon>Metazoa</taxon>
        <taxon>Cnidaria</taxon>
        <taxon>Hydrozoa</taxon>
        <taxon>Hydroidolina</taxon>
        <taxon>Anthoathecata</taxon>
        <taxon>Aplanulata</taxon>
        <taxon>Hydridae</taxon>
        <taxon>Hydra</taxon>
    </lineage>
</organism>
<protein>
    <recommendedName>
        <fullName evidence="4">Arminin 7965</fullName>
    </recommendedName>
</protein>
<name>ARM65_HYDVU</name>
<keyword id="KW-0027">Amidation</keyword>
<keyword id="KW-0044">Antibiotic</keyword>
<keyword id="KW-0929">Antimicrobial</keyword>
<keyword id="KW-0391">Immunity</keyword>
<keyword id="KW-0399">Innate immunity</keyword>
<keyword id="KW-0472">Membrane</keyword>
<keyword id="KW-1185">Reference proteome</keyword>
<keyword id="KW-0964">Secreted</keyword>
<keyword id="KW-0732">Signal</keyword>
<keyword id="KW-1052">Target cell membrane</keyword>
<keyword id="KW-1053">Target membrane</keyword>
<comment type="function">
    <text evidence="1">Antimicrobial peptide with a broad-spectrum antimicrobial activity. Keeps its antibacterial activity under a wide range of salt concentrations that mimic physiological conditions of human blood, which is surprising, since Hydra is an obligate freshwater animal with nearly no salt tolerance. Does not affect red blood cells.</text>
</comment>
<comment type="subcellular location">
    <subcellularLocation>
        <location evidence="1">Secreted</location>
    </subcellularLocation>
    <subcellularLocation>
        <location evidence="1">Target cell membrane</location>
    </subcellularLocation>
</comment>
<comment type="tissue specificity">
    <text evidence="3">Expressed in entodermal epithelium along the body column.</text>
</comment>
<comment type="similarity">
    <text evidence="5">Belongs to the arminin family.</text>
</comment>
<sequence>MKTVFAILFLTFIAFTYAKSYEDVKEEIKNEVEREIFEDLEEESDVLDSNVRELNDAKPWRFRRAIRSIRWRKVGPYVPIIVKMAGKK</sequence>
<feature type="signal peptide" evidence="2">
    <location>
        <begin position="1"/>
        <end position="18"/>
    </location>
</feature>
<feature type="propeptide" id="PRO_0000461974" evidence="1">
    <location>
        <begin position="19"/>
        <end position="57"/>
    </location>
</feature>
<feature type="peptide" id="PRO_5004480765" description="Arminin 7965" evidence="1">
    <location>
        <begin position="58"/>
        <end position="85"/>
    </location>
</feature>
<feature type="modified residue" description="Alanine amide" evidence="1">
    <location>
        <position position="85"/>
    </location>
</feature>
<reference evidence="6" key="1">
    <citation type="journal article" date="2013" name="Proc. Natl. Acad. Sci. U.S.A.">
        <title>Distinct antimicrobial peptide expression determines host species-specific bacterial associations.</title>
        <authorList>
            <person name="Franzenburg S."/>
            <person name="Walter J."/>
            <person name="Kunzel S."/>
            <person name="Wang J."/>
            <person name="Baines J.F."/>
            <person name="Bosch T.C."/>
            <person name="Fraune S."/>
        </authorList>
    </citation>
    <scope>NUCLEOTIDE SEQUENCE [MRNA]</scope>
    <scope>TISSUE SPECIFICITY</scope>
    <source>
        <strain>AEP</strain>
    </source>
</reference>
<dbReference type="EMBL" id="KC701496">
    <property type="protein sequence ID" value="AGN53403.1"/>
    <property type="molecule type" value="mRNA"/>
</dbReference>
<dbReference type="RefSeq" id="XP_065652693.1">
    <property type="nucleotide sequence ID" value="XM_065796621.1"/>
</dbReference>
<dbReference type="GeneID" id="136079963"/>
<dbReference type="Proteomes" id="UP000694840">
    <property type="component" value="Unplaced"/>
</dbReference>
<dbReference type="GO" id="GO:0005576">
    <property type="term" value="C:extracellular region"/>
    <property type="evidence" value="ECO:0007669"/>
    <property type="project" value="UniProtKB-SubCell"/>
</dbReference>
<accession>R9UFJ8</accession>
<evidence type="ECO:0000250" key="1">
    <source>
        <dbReference type="UniProtKB" id="D2XUU4"/>
    </source>
</evidence>
<evidence type="ECO:0000255" key="2"/>
<evidence type="ECO:0000269" key="3">
    <source>
    </source>
</evidence>
<evidence type="ECO:0000303" key="4">
    <source>
    </source>
</evidence>
<evidence type="ECO:0000305" key="5"/>
<evidence type="ECO:0000312" key="6">
    <source>
        <dbReference type="EMBL" id="AGN53403.1"/>
    </source>
</evidence>
<proteinExistence type="evidence at transcript level"/>